<name>QUEA_ACIF5</name>
<feature type="chain" id="PRO_1000094745" description="S-adenosylmethionine:tRNA ribosyltransferase-isomerase">
    <location>
        <begin position="1"/>
        <end position="345"/>
    </location>
</feature>
<protein>
    <recommendedName>
        <fullName evidence="1">S-adenosylmethionine:tRNA ribosyltransferase-isomerase</fullName>
        <ecNumber evidence="1">2.4.99.17</ecNumber>
    </recommendedName>
    <alternativeName>
        <fullName evidence="1">Queuosine biosynthesis protein QueA</fullName>
    </alternativeName>
</protein>
<sequence>MHKKDFHYELPDALIAQAPLPERSAARMLIVDGHQGTWEDAWVRDLPGVLRPGDLLVLNDTRVLPARLQARKTTGGAVELLLDRLLDARDGWFLAKSSKALRPGMSIHLPGGAVATVEEKDGMDVRLSLPADVAWLPILEAGGSMPLPPYIRRAAEASDRERYQTVYAARPGAVAAPTAGLHFDTELLDALAARGVERTFVTLHVGAGTFLPVRSEDITEHPMHAETMEVSATTVAAVAAARARGGRVIAVGTTACRALETAAQGGTLRPFTGETRLFLYPGKTFQVTDGLLTNFHLPESTLLMLVCAFAGMECMLAAYRHAVAEGYRFFSYGDAMLISPQAGRR</sequence>
<dbReference type="EC" id="2.4.99.17" evidence="1"/>
<dbReference type="EMBL" id="CP001132">
    <property type="protein sequence ID" value="ACH83940.1"/>
    <property type="molecule type" value="Genomic_DNA"/>
</dbReference>
<dbReference type="RefSeq" id="WP_012536939.1">
    <property type="nucleotide sequence ID" value="NC_011206.1"/>
</dbReference>
<dbReference type="SMR" id="B5EK09"/>
<dbReference type="GeneID" id="65281196"/>
<dbReference type="KEGG" id="afe:Lferr_1718"/>
<dbReference type="eggNOG" id="COG0809">
    <property type="taxonomic scope" value="Bacteria"/>
</dbReference>
<dbReference type="HOGENOM" id="CLU_039110_1_0_6"/>
<dbReference type="UniPathway" id="UPA00392"/>
<dbReference type="GO" id="GO:0005737">
    <property type="term" value="C:cytoplasm"/>
    <property type="evidence" value="ECO:0007669"/>
    <property type="project" value="UniProtKB-SubCell"/>
</dbReference>
<dbReference type="GO" id="GO:0051075">
    <property type="term" value="F:S-adenosylmethionine:tRNA ribosyltransferase-isomerase activity"/>
    <property type="evidence" value="ECO:0007669"/>
    <property type="project" value="UniProtKB-EC"/>
</dbReference>
<dbReference type="GO" id="GO:0008616">
    <property type="term" value="P:queuosine biosynthetic process"/>
    <property type="evidence" value="ECO:0007669"/>
    <property type="project" value="UniProtKB-UniRule"/>
</dbReference>
<dbReference type="GO" id="GO:0002099">
    <property type="term" value="P:tRNA wobble guanine modification"/>
    <property type="evidence" value="ECO:0007669"/>
    <property type="project" value="TreeGrafter"/>
</dbReference>
<dbReference type="FunFam" id="3.40.1780.10:FF:000001">
    <property type="entry name" value="S-adenosylmethionine:tRNA ribosyltransferase-isomerase"/>
    <property type="match status" value="1"/>
</dbReference>
<dbReference type="Gene3D" id="2.40.10.240">
    <property type="entry name" value="QueA-like"/>
    <property type="match status" value="1"/>
</dbReference>
<dbReference type="Gene3D" id="3.40.1780.10">
    <property type="entry name" value="QueA-like"/>
    <property type="match status" value="1"/>
</dbReference>
<dbReference type="HAMAP" id="MF_00113">
    <property type="entry name" value="QueA"/>
    <property type="match status" value="1"/>
</dbReference>
<dbReference type="InterPro" id="IPR003699">
    <property type="entry name" value="QueA"/>
</dbReference>
<dbReference type="InterPro" id="IPR042118">
    <property type="entry name" value="QueA_dom1"/>
</dbReference>
<dbReference type="InterPro" id="IPR042119">
    <property type="entry name" value="QueA_dom2"/>
</dbReference>
<dbReference type="InterPro" id="IPR036100">
    <property type="entry name" value="QueA_sf"/>
</dbReference>
<dbReference type="NCBIfam" id="NF001140">
    <property type="entry name" value="PRK00147.1"/>
    <property type="match status" value="1"/>
</dbReference>
<dbReference type="NCBIfam" id="TIGR00113">
    <property type="entry name" value="queA"/>
    <property type="match status" value="1"/>
</dbReference>
<dbReference type="PANTHER" id="PTHR30307">
    <property type="entry name" value="S-ADENOSYLMETHIONINE:TRNA RIBOSYLTRANSFERASE-ISOMERASE"/>
    <property type="match status" value="1"/>
</dbReference>
<dbReference type="PANTHER" id="PTHR30307:SF0">
    <property type="entry name" value="S-ADENOSYLMETHIONINE:TRNA RIBOSYLTRANSFERASE-ISOMERASE"/>
    <property type="match status" value="1"/>
</dbReference>
<dbReference type="Pfam" id="PF02547">
    <property type="entry name" value="Queuosine_synth"/>
    <property type="match status" value="1"/>
</dbReference>
<dbReference type="SUPFAM" id="SSF111337">
    <property type="entry name" value="QueA-like"/>
    <property type="match status" value="1"/>
</dbReference>
<proteinExistence type="inferred from homology"/>
<reference key="1">
    <citation type="submission" date="2008-08" db="EMBL/GenBank/DDBJ databases">
        <title>Complete sequence of Acidithiobacillus ferrooxidans ATCC 53993.</title>
        <authorList>
            <person name="Lucas S."/>
            <person name="Copeland A."/>
            <person name="Lapidus A."/>
            <person name="Glavina del Rio T."/>
            <person name="Dalin E."/>
            <person name="Tice H."/>
            <person name="Bruce D."/>
            <person name="Goodwin L."/>
            <person name="Pitluck S."/>
            <person name="Sims D."/>
            <person name="Brettin T."/>
            <person name="Detter J.C."/>
            <person name="Han C."/>
            <person name="Kuske C.R."/>
            <person name="Larimer F."/>
            <person name="Land M."/>
            <person name="Hauser L."/>
            <person name="Kyrpides N."/>
            <person name="Lykidis A."/>
            <person name="Borole A.P."/>
        </authorList>
    </citation>
    <scope>NUCLEOTIDE SEQUENCE [LARGE SCALE GENOMIC DNA]</scope>
    <source>
        <strain>ATCC 53993 / BNL-5-31</strain>
    </source>
</reference>
<evidence type="ECO:0000255" key="1">
    <source>
        <dbReference type="HAMAP-Rule" id="MF_00113"/>
    </source>
</evidence>
<comment type="function">
    <text evidence="1">Transfers and isomerizes the ribose moiety from AdoMet to the 7-aminomethyl group of 7-deazaguanine (preQ1-tRNA) to give epoxyqueuosine (oQ-tRNA).</text>
</comment>
<comment type="catalytic activity">
    <reaction evidence="1">
        <text>7-aminomethyl-7-carbaguanosine(34) in tRNA + S-adenosyl-L-methionine = epoxyqueuosine(34) in tRNA + adenine + L-methionine + 2 H(+)</text>
        <dbReference type="Rhea" id="RHEA:32155"/>
        <dbReference type="Rhea" id="RHEA-COMP:10342"/>
        <dbReference type="Rhea" id="RHEA-COMP:18582"/>
        <dbReference type="ChEBI" id="CHEBI:15378"/>
        <dbReference type="ChEBI" id="CHEBI:16708"/>
        <dbReference type="ChEBI" id="CHEBI:57844"/>
        <dbReference type="ChEBI" id="CHEBI:59789"/>
        <dbReference type="ChEBI" id="CHEBI:82833"/>
        <dbReference type="ChEBI" id="CHEBI:194443"/>
        <dbReference type="EC" id="2.4.99.17"/>
    </reaction>
</comment>
<comment type="pathway">
    <text evidence="1">tRNA modification; tRNA-queuosine biosynthesis.</text>
</comment>
<comment type="subunit">
    <text evidence="1">Monomer.</text>
</comment>
<comment type="subcellular location">
    <subcellularLocation>
        <location evidence="1">Cytoplasm</location>
    </subcellularLocation>
</comment>
<comment type="similarity">
    <text evidence="1">Belongs to the QueA family.</text>
</comment>
<gene>
    <name evidence="1" type="primary">queA</name>
    <name type="ordered locus">Lferr_1718</name>
</gene>
<accession>B5EK09</accession>
<keyword id="KW-0963">Cytoplasm</keyword>
<keyword id="KW-0671">Queuosine biosynthesis</keyword>
<keyword id="KW-0949">S-adenosyl-L-methionine</keyword>
<keyword id="KW-0808">Transferase</keyword>
<organism>
    <name type="scientific">Acidithiobacillus ferrooxidans (strain ATCC 53993 / BNL-5-31)</name>
    <name type="common">Leptospirillum ferrooxidans (ATCC 53993)</name>
    <dbReference type="NCBI Taxonomy" id="380394"/>
    <lineage>
        <taxon>Bacteria</taxon>
        <taxon>Pseudomonadati</taxon>
        <taxon>Pseudomonadota</taxon>
        <taxon>Acidithiobacillia</taxon>
        <taxon>Acidithiobacillales</taxon>
        <taxon>Acidithiobacillaceae</taxon>
        <taxon>Acidithiobacillus</taxon>
    </lineage>
</organism>